<keyword id="KW-0320">Glycogen biosynthesis</keyword>
<keyword id="KW-0328">Glycosyltransferase</keyword>
<keyword id="KW-0808">Transferase</keyword>
<reference key="1">
    <citation type="journal article" date="2008" name="BMC Genomics">
        <title>The genome sequence of the fish pathogen Aliivibrio salmonicida strain LFI1238 shows extensive evidence of gene decay.</title>
        <authorList>
            <person name="Hjerde E."/>
            <person name="Lorentzen M.S."/>
            <person name="Holden M.T."/>
            <person name="Seeger K."/>
            <person name="Paulsen S."/>
            <person name="Bason N."/>
            <person name="Churcher C."/>
            <person name="Harris D."/>
            <person name="Norbertczak H."/>
            <person name="Quail M.A."/>
            <person name="Sanders S."/>
            <person name="Thurston S."/>
            <person name="Parkhill J."/>
            <person name="Willassen N.P."/>
            <person name="Thomson N.R."/>
        </authorList>
    </citation>
    <scope>NUCLEOTIDE SEQUENCE [LARGE SCALE GENOMIC DNA]</scope>
    <source>
        <strain>LFI1238</strain>
    </source>
</reference>
<dbReference type="EC" id="2.4.1.21" evidence="1"/>
<dbReference type="EMBL" id="FM178380">
    <property type="protein sequence ID" value="CAQ80993.1"/>
    <property type="molecule type" value="Genomic_DNA"/>
</dbReference>
<dbReference type="RefSeq" id="WP_012551616.1">
    <property type="nucleotide sequence ID" value="NC_011313.1"/>
</dbReference>
<dbReference type="SMR" id="B6EQL7"/>
<dbReference type="CAZy" id="GT5">
    <property type="family name" value="Glycosyltransferase Family 5"/>
</dbReference>
<dbReference type="KEGG" id="vsa:VSAL_II0239"/>
<dbReference type="eggNOG" id="COG0297">
    <property type="taxonomic scope" value="Bacteria"/>
</dbReference>
<dbReference type="HOGENOM" id="CLU_009583_18_2_6"/>
<dbReference type="UniPathway" id="UPA00164"/>
<dbReference type="Proteomes" id="UP000001730">
    <property type="component" value="Chromosome 2"/>
</dbReference>
<dbReference type="GO" id="GO:0005829">
    <property type="term" value="C:cytosol"/>
    <property type="evidence" value="ECO:0007669"/>
    <property type="project" value="TreeGrafter"/>
</dbReference>
<dbReference type="GO" id="GO:0009011">
    <property type="term" value="F:alpha-1,4-glucan glucosyltransferase (ADP-glucose donor) activity"/>
    <property type="evidence" value="ECO:0007669"/>
    <property type="project" value="UniProtKB-UniRule"/>
</dbReference>
<dbReference type="GO" id="GO:0004373">
    <property type="term" value="F:alpha-1,4-glucan glucosyltransferase (UDP-glucose donor) activity"/>
    <property type="evidence" value="ECO:0007669"/>
    <property type="project" value="InterPro"/>
</dbReference>
<dbReference type="GO" id="GO:0005978">
    <property type="term" value="P:glycogen biosynthetic process"/>
    <property type="evidence" value="ECO:0007669"/>
    <property type="project" value="UniProtKB-UniRule"/>
</dbReference>
<dbReference type="CDD" id="cd03791">
    <property type="entry name" value="GT5_Glycogen_synthase_DULL1-like"/>
    <property type="match status" value="1"/>
</dbReference>
<dbReference type="Gene3D" id="3.40.50.2000">
    <property type="entry name" value="Glycogen Phosphorylase B"/>
    <property type="match status" value="2"/>
</dbReference>
<dbReference type="HAMAP" id="MF_00484">
    <property type="entry name" value="Glycogen_synth"/>
    <property type="match status" value="1"/>
</dbReference>
<dbReference type="InterPro" id="IPR001296">
    <property type="entry name" value="Glyco_trans_1"/>
</dbReference>
<dbReference type="InterPro" id="IPR011835">
    <property type="entry name" value="GS/SS"/>
</dbReference>
<dbReference type="InterPro" id="IPR013534">
    <property type="entry name" value="Starch_synth_cat_dom"/>
</dbReference>
<dbReference type="NCBIfam" id="TIGR02095">
    <property type="entry name" value="glgA"/>
    <property type="match status" value="1"/>
</dbReference>
<dbReference type="NCBIfam" id="NF001903">
    <property type="entry name" value="PRK00654.2-2"/>
    <property type="match status" value="1"/>
</dbReference>
<dbReference type="NCBIfam" id="NF001906">
    <property type="entry name" value="PRK00654.2-5"/>
    <property type="match status" value="1"/>
</dbReference>
<dbReference type="PANTHER" id="PTHR45825:SF11">
    <property type="entry name" value="ALPHA AMYLASE DOMAIN-CONTAINING PROTEIN"/>
    <property type="match status" value="1"/>
</dbReference>
<dbReference type="PANTHER" id="PTHR45825">
    <property type="entry name" value="GRANULE-BOUND STARCH SYNTHASE 1, CHLOROPLASTIC/AMYLOPLASTIC"/>
    <property type="match status" value="1"/>
</dbReference>
<dbReference type="Pfam" id="PF08323">
    <property type="entry name" value="Glyco_transf_5"/>
    <property type="match status" value="1"/>
</dbReference>
<dbReference type="Pfam" id="PF00534">
    <property type="entry name" value="Glycos_transf_1"/>
    <property type="match status" value="1"/>
</dbReference>
<dbReference type="SUPFAM" id="SSF53756">
    <property type="entry name" value="UDP-Glycosyltransferase/glycogen phosphorylase"/>
    <property type="match status" value="1"/>
</dbReference>
<accession>B6EQL7</accession>
<sequence length="482" mass="53742">MATKTLSILFAASEVEGLIKSGGLADVAKALPKSLKDLGHEIHIAMPAYSAIPERDDAEVLLSSTLEHWPHTPYQVRSLSVEGITVLGIECADYFDRAEMYAENNQAYADNGERFAFFSAACLDMLPKLKIKPDVIHANDWHTGLLPYLLKKRYANDAYFSQVRSVLSVHNAVFKGIFHYDDIGCLSEFKTHYVPEAAVSHTHISMLKAGVQCADKINAVSPTYAKELLTELGSHGMASDFQAREPDLFGILNGCDYSEWSPETDTFIPKQFKANRISMVRGKKVCKAALQEEVGLPQKEVAMYGMVCRLTNQKGIHYLLPILEQFLKHDLQIVIVGTGDPVLAAQLTEIAAIHSDKFAFVEAYSNKLAHWIEASSDFFLMPSEFEPCGLNQIYSMSYGALPIVRAVGGLKDSVIDYDSDNENATGFSFINPEPTELLLVLMRSLLLYAQDLNEVKRIQLHAMKQNFSWSDAAEKYVEMYLD</sequence>
<evidence type="ECO:0000255" key="1">
    <source>
        <dbReference type="HAMAP-Rule" id="MF_00484"/>
    </source>
</evidence>
<protein>
    <recommendedName>
        <fullName evidence="1">Glycogen synthase</fullName>
        <ecNumber evidence="1">2.4.1.21</ecNumber>
    </recommendedName>
    <alternativeName>
        <fullName evidence="1">Starch [bacterial glycogen] synthase</fullName>
    </alternativeName>
</protein>
<proteinExistence type="inferred from homology"/>
<gene>
    <name evidence="1" type="primary">glgA</name>
    <name type="ordered locus">VSAL_II0239</name>
</gene>
<organism>
    <name type="scientific">Aliivibrio salmonicida (strain LFI1238)</name>
    <name type="common">Vibrio salmonicida (strain LFI1238)</name>
    <dbReference type="NCBI Taxonomy" id="316275"/>
    <lineage>
        <taxon>Bacteria</taxon>
        <taxon>Pseudomonadati</taxon>
        <taxon>Pseudomonadota</taxon>
        <taxon>Gammaproteobacteria</taxon>
        <taxon>Vibrionales</taxon>
        <taxon>Vibrionaceae</taxon>
        <taxon>Aliivibrio</taxon>
    </lineage>
</organism>
<comment type="function">
    <text evidence="1">Synthesizes alpha-1,4-glucan chains using ADP-glucose.</text>
</comment>
<comment type="catalytic activity">
    <reaction evidence="1">
        <text>[(1-&gt;4)-alpha-D-glucosyl](n) + ADP-alpha-D-glucose = [(1-&gt;4)-alpha-D-glucosyl](n+1) + ADP + H(+)</text>
        <dbReference type="Rhea" id="RHEA:18189"/>
        <dbReference type="Rhea" id="RHEA-COMP:9584"/>
        <dbReference type="Rhea" id="RHEA-COMP:9587"/>
        <dbReference type="ChEBI" id="CHEBI:15378"/>
        <dbReference type="ChEBI" id="CHEBI:15444"/>
        <dbReference type="ChEBI" id="CHEBI:57498"/>
        <dbReference type="ChEBI" id="CHEBI:456216"/>
        <dbReference type="EC" id="2.4.1.21"/>
    </reaction>
</comment>
<comment type="pathway">
    <text evidence="1">Glycan biosynthesis; glycogen biosynthesis.</text>
</comment>
<comment type="similarity">
    <text evidence="1">Belongs to the glycosyltransferase 1 family. Bacterial/plant glycogen synthase subfamily.</text>
</comment>
<name>GLGA_ALISL</name>
<feature type="chain" id="PRO_1000126052" description="Glycogen synthase">
    <location>
        <begin position="1"/>
        <end position="482"/>
    </location>
</feature>
<feature type="binding site" evidence="1">
    <location>
        <position position="20"/>
    </location>
    <ligand>
        <name>ADP-alpha-D-glucose</name>
        <dbReference type="ChEBI" id="CHEBI:57498"/>
    </ligand>
</feature>